<comment type="function">
    <text evidence="1 5 6 7 9">Catalytically inactive regulatory factor of DNA methyltransferases that can either promote or inhibit DNA methylation depending on the context (PubMed:11719692, PubMed:15318244, PubMed:15671018, PubMed:24074865). Essential for the function of DNMT3A and DNMT3B: activates DNMT3A and DNMT3B by binding to their catalytic domain (PubMed:15671018). Acts by accelerating the binding of DNA and S-adenosyl-L-methionine (AdoMet) to the methyltransferases and dissociates from the complex after DNA binding to the methyltransferases (PubMed:15671018). Recognizes unmethylated histone H3 lysine 4 (H3K4me0) and induces de novo DNA methylation by recruitment or activation of DNMT3 (By similarity). Plays a key role in embryonic stem cells and germ cells (PubMed:11719692, PubMed:15318244, PubMed:24074865). In germ cells, required for the methylation of imprinted loci together with DNMT3A (PubMed:11719692). In male germ cells, specifically required to methylate retrotransposons, preventing their mobilization (PubMed:15318244). Plays a key role in embryonic stem cells (ESCs) by acting both as an positive and negative regulator of DNA methylation (PubMed:24074865). While it promotes DNA methylation of housekeeping genes together with DNMT3A and DNMT3B, it also acts as an inhibitor of DNA methylation at the promoter of bivalent genes (PubMed:24074865). Interacts with the EZH2 component of the PRC2/EED-EZH2 complex, preventing interaction of DNMT3A and DNMT3B with the PRC2/EED-EZH2 complex, leading to maintain low methylation levels at the promoters of bivalent genes (PubMed:24074865). Promotes differentiation of ESCs into primordial germ cells by inhibiting DNA methylation at the promoter of RHOX5, thereby activating its expression (PubMed:24074865).</text>
</comment>
<comment type="subunit">
    <text evidence="1 9 10">Homodimer (By similarity). Heterotetramer composed of 1 DNMT3A homodimer and 2 DNMT3L subunits (DNMT3L-DNMT3A-DNMT3A-DNMT3L) (By similarity). Interacts with histone H3 (via N-terminus); interaction is strongly inhibited by methylation at lysine 4 (H3K4me) (By similarity). Interacts with EZH2; the interaction is direct (PubMed:24074865). Interacts with SPOCD1 (PubMed:32674113).</text>
</comment>
<comment type="interaction">
    <interactant intactId="EBI-3043871">
        <id>Q9CWR8</id>
    </interactant>
    <interactant intactId="EBI-995154">
        <id>O88508</id>
        <label>Dnmt3a</label>
    </interactant>
    <organismsDiffer>false</organismsDiffer>
    <experiments>6</experiments>
</comment>
<comment type="interaction">
    <interactant intactId="EBI-3043871">
        <id>Q9CWR8</id>
    </interactant>
    <interactant intactId="EBI-15650457">
        <id>O88508-1</id>
        <label>Dnmt3a</label>
    </interactant>
    <organismsDiffer>false</organismsDiffer>
    <experiments>6</experiments>
</comment>
<comment type="interaction">
    <interactant intactId="EBI-3043871">
        <id>Q9CWR8</id>
    </interactant>
    <interactant intactId="EBI-7987547">
        <id>O88509</id>
        <label>Dnmt3b</label>
    </interactant>
    <organismsDiffer>false</organismsDiffer>
    <experiments>6</experiments>
</comment>
<comment type="interaction">
    <interactant intactId="EBI-3043871">
        <id>Q9CWR8</id>
    </interactant>
    <interactant intactId="EBI-904311">
        <id>Q61188</id>
        <label>Ezh2</label>
    </interactant>
    <organismsDiffer>false</organismsDiffer>
    <experiments>10</experiments>
</comment>
<comment type="interaction">
    <interactant intactId="EBI-3043871">
        <id>Q9CWR8</id>
    </interactant>
    <interactant intactId="EBI-530054">
        <id>Q15910</id>
        <label>EZH2</label>
    </interactant>
    <organismsDiffer>true</organismsDiffer>
    <experiments>2</experiments>
</comment>
<comment type="subcellular location">
    <subcellularLocation>
        <location evidence="11">Nucleus</location>
    </subcellularLocation>
</comment>
<comment type="tissue specificity">
    <text evidence="4">Expressed in testis, thymus, ovary, and heart (PubMed:11306809).</text>
</comment>
<comment type="developmental stage">
    <text evidence="6">In testis, first observed in non-dividing prospermatogonia after 12.5 dpc and is highest at about the time of birth; expression declines rapidly after birth and is extinguished by 6 days post partum, when most prospermatogonia have differentiated into dividing spermatogonial stem cells (PubMed:15318244).</text>
</comment>
<comment type="disruption phenotype">
    <text evidence="5 6">Oogenesis in female mice takes place normally, but the heterozygous offspring of homozygous mutant females die before mid-gestation due to biallelic expression of imprinted genes normally methylated and silenced on the allele of maternal origin (PubMed:11719692). Male mice are viable but sterile, with a complete absence of germ cells in adult males (PubMed:11719692). Spermatocytes show asynapsis or abnormal synapsis, and do not progress to the full pachytene stage due to demethylation of methylation of both long-terminal-repeat (LTR) and non-LTR retrotransposons (PubMed:15318244).</text>
</comment>
<name>DNM3L_MOUSE</name>
<dbReference type="EMBL" id="AJ404467">
    <property type="protein sequence ID" value="CAB94726.1"/>
    <property type="molecule type" value="mRNA"/>
</dbReference>
<dbReference type="EMBL" id="AF220524">
    <property type="protein sequence ID" value="AAF73868.1"/>
    <property type="molecule type" value="mRNA"/>
</dbReference>
<dbReference type="EMBL" id="AK010434">
    <property type="protein sequence ID" value="BAB26936.1"/>
    <property type="molecule type" value="mRNA"/>
</dbReference>
<dbReference type="EMBL" id="BC083147">
    <property type="protein sequence ID" value="AAH83147.1"/>
    <property type="molecule type" value="mRNA"/>
</dbReference>
<dbReference type="CCDS" id="CCDS23962.1"/>
<dbReference type="RefSeq" id="NP_001075164.1">
    <property type="nucleotide sequence ID" value="NM_001081695.2"/>
</dbReference>
<dbReference type="RefSeq" id="NP_001271126.1">
    <property type="nucleotide sequence ID" value="NM_001284197.1"/>
</dbReference>
<dbReference type="RefSeq" id="NP_062321.1">
    <property type="nucleotide sequence ID" value="NM_019448.4"/>
</dbReference>
<dbReference type="SMR" id="Q9CWR8"/>
<dbReference type="BioGRID" id="207659">
    <property type="interactions" value="6"/>
</dbReference>
<dbReference type="DIP" id="DIP-49029N"/>
<dbReference type="FunCoup" id="Q9CWR8">
    <property type="interactions" value="248"/>
</dbReference>
<dbReference type="IntAct" id="Q9CWR8">
    <property type="interactions" value="8"/>
</dbReference>
<dbReference type="MINT" id="Q9CWR8"/>
<dbReference type="STRING" id="10090.ENSMUSP00000121562"/>
<dbReference type="ChEMBL" id="CHEMBL5483092"/>
<dbReference type="REBASE" id="6168">
    <property type="entry name" value="M.MmuDnmt3L"/>
</dbReference>
<dbReference type="iPTMnet" id="Q9CWR8"/>
<dbReference type="PhosphoSitePlus" id="Q9CWR8"/>
<dbReference type="PaxDb" id="10090-ENSMUSP00000121562"/>
<dbReference type="DNASU" id="54427"/>
<dbReference type="Ensembl" id="ENSMUST00000000746.12">
    <property type="protein sequence ID" value="ENSMUSP00000000746.6"/>
    <property type="gene ID" value="ENSMUSG00000000730.14"/>
</dbReference>
<dbReference type="Ensembl" id="ENSMUST00000138785.8">
    <property type="protein sequence ID" value="ENSMUSP00000121562.2"/>
    <property type="gene ID" value="ENSMUSG00000000730.14"/>
</dbReference>
<dbReference type="Ensembl" id="ENSMUST00000151242.8">
    <property type="protein sequence ID" value="ENSMUSP00000116970.2"/>
    <property type="gene ID" value="ENSMUSG00000000730.14"/>
</dbReference>
<dbReference type="GeneID" id="54427"/>
<dbReference type="KEGG" id="mmu:54427"/>
<dbReference type="UCSC" id="uc007fxe.2">
    <property type="organism name" value="mouse"/>
</dbReference>
<dbReference type="AGR" id="MGI:1859287"/>
<dbReference type="CTD" id="29947"/>
<dbReference type="MGI" id="MGI:1859287">
    <property type="gene designation" value="Dnmt3l"/>
</dbReference>
<dbReference type="VEuPathDB" id="HostDB:ENSMUSG00000000730"/>
<dbReference type="eggNOG" id="ENOG502SIGQ">
    <property type="taxonomic scope" value="Eukaryota"/>
</dbReference>
<dbReference type="GeneTree" id="ENSGT00940000162228"/>
<dbReference type="HOGENOM" id="CLU_006958_9_0_1"/>
<dbReference type="InParanoid" id="Q9CWR8"/>
<dbReference type="OMA" id="ESPLEMY"/>
<dbReference type="OrthoDB" id="641149at2759"/>
<dbReference type="PhylomeDB" id="Q9CWR8"/>
<dbReference type="TreeFam" id="TF329039"/>
<dbReference type="BioGRID-ORCS" id="54427">
    <property type="hits" value="3 hits in 81 CRISPR screens"/>
</dbReference>
<dbReference type="ChiTaRS" id="Dnmt3l">
    <property type="organism name" value="mouse"/>
</dbReference>
<dbReference type="PRO" id="PR:Q9CWR8"/>
<dbReference type="Proteomes" id="UP000000589">
    <property type="component" value="Chromosome 10"/>
</dbReference>
<dbReference type="RNAct" id="Q9CWR8">
    <property type="molecule type" value="protein"/>
</dbReference>
<dbReference type="Bgee" id="ENSMUSG00000000730">
    <property type="expression patterns" value="Expressed in urinary bladder urothelium and 80 other cell types or tissues"/>
</dbReference>
<dbReference type="ExpressionAtlas" id="Q9CWR8">
    <property type="expression patterns" value="baseline and differential"/>
</dbReference>
<dbReference type="GO" id="GO:1902494">
    <property type="term" value="C:catalytic complex"/>
    <property type="evidence" value="ECO:0007669"/>
    <property type="project" value="Ensembl"/>
</dbReference>
<dbReference type="GO" id="GO:0000794">
    <property type="term" value="C:condensed nuclear chromosome"/>
    <property type="evidence" value="ECO:0000314"/>
    <property type="project" value="MGI"/>
</dbReference>
<dbReference type="GO" id="GO:0005737">
    <property type="term" value="C:cytoplasm"/>
    <property type="evidence" value="ECO:0000314"/>
    <property type="project" value="MGI"/>
</dbReference>
<dbReference type="GO" id="GO:0000792">
    <property type="term" value="C:heterochromatin"/>
    <property type="evidence" value="ECO:0000314"/>
    <property type="project" value="MGI"/>
</dbReference>
<dbReference type="GO" id="GO:0005654">
    <property type="term" value="C:nucleoplasm"/>
    <property type="evidence" value="ECO:0000304"/>
    <property type="project" value="Reactome"/>
</dbReference>
<dbReference type="GO" id="GO:0005634">
    <property type="term" value="C:nucleus"/>
    <property type="evidence" value="ECO:0000314"/>
    <property type="project" value="MGI"/>
</dbReference>
<dbReference type="GO" id="GO:0008047">
    <property type="term" value="F:enzyme activator activity"/>
    <property type="evidence" value="ECO:0000314"/>
    <property type="project" value="MGI"/>
</dbReference>
<dbReference type="GO" id="GO:0019899">
    <property type="term" value="F:enzyme binding"/>
    <property type="evidence" value="ECO:0000250"/>
    <property type="project" value="UniProtKB"/>
</dbReference>
<dbReference type="GO" id="GO:0008270">
    <property type="term" value="F:zinc ion binding"/>
    <property type="evidence" value="ECO:0007669"/>
    <property type="project" value="UniProtKB-KW"/>
</dbReference>
<dbReference type="GO" id="GO:0141068">
    <property type="term" value="P:autosome genomic imprinting"/>
    <property type="evidence" value="ECO:0000315"/>
    <property type="project" value="MGI"/>
</dbReference>
<dbReference type="GO" id="GO:0060718">
    <property type="term" value="P:chorionic trophoblast cell differentiation"/>
    <property type="evidence" value="ECO:0000315"/>
    <property type="project" value="MGI"/>
</dbReference>
<dbReference type="GO" id="GO:0006346">
    <property type="term" value="P:DNA methylation-dependent constitutive heterochromatin formation"/>
    <property type="evidence" value="ECO:0000315"/>
    <property type="project" value="UniProtKB"/>
</dbReference>
<dbReference type="GO" id="GO:0044726">
    <property type="term" value="P:epigenetic programing of female pronucleus"/>
    <property type="evidence" value="ECO:0000315"/>
    <property type="project" value="MGI"/>
</dbReference>
<dbReference type="GO" id="GO:0071514">
    <property type="term" value="P:genomic imprinting"/>
    <property type="evidence" value="ECO:0000315"/>
    <property type="project" value="UniProtKB"/>
</dbReference>
<dbReference type="GO" id="GO:0007141">
    <property type="term" value="P:male meiosis I"/>
    <property type="evidence" value="ECO:0000315"/>
    <property type="project" value="UniProtKB"/>
</dbReference>
<dbReference type="GO" id="GO:0032259">
    <property type="term" value="P:methylation"/>
    <property type="evidence" value="ECO:0000315"/>
    <property type="project" value="MGI"/>
</dbReference>
<dbReference type="GO" id="GO:0090310">
    <property type="term" value="P:negative regulation of DNA methylation-dependent heterochromatin formation"/>
    <property type="evidence" value="ECO:0000315"/>
    <property type="project" value="UniProtKB"/>
</dbReference>
<dbReference type="GO" id="GO:0044027">
    <property type="term" value="P:negative regulation of gene expression via chromosomal CpG island methylation"/>
    <property type="evidence" value="ECO:0000314"/>
    <property type="project" value="MGI"/>
</dbReference>
<dbReference type="GO" id="GO:0045814">
    <property type="term" value="P:negative regulation of gene expression, epigenetic"/>
    <property type="evidence" value="ECO:0000250"/>
    <property type="project" value="UniProtKB"/>
</dbReference>
<dbReference type="GO" id="GO:0001890">
    <property type="term" value="P:placenta development"/>
    <property type="evidence" value="ECO:0000315"/>
    <property type="project" value="MGI"/>
</dbReference>
<dbReference type="GO" id="GO:0009791">
    <property type="term" value="P:post-embryonic development"/>
    <property type="evidence" value="ECO:0000314"/>
    <property type="project" value="MGI"/>
</dbReference>
<dbReference type="GO" id="GO:0007283">
    <property type="term" value="P:spermatogenesis"/>
    <property type="evidence" value="ECO:0000315"/>
    <property type="project" value="UniProtKB"/>
</dbReference>
<dbReference type="GO" id="GO:0048863">
    <property type="term" value="P:stem cell differentiation"/>
    <property type="evidence" value="ECO:0000315"/>
    <property type="project" value="UniProtKB"/>
</dbReference>
<dbReference type="GO" id="GO:0141005">
    <property type="term" value="P:transposable element silencing by heterochromatin formation"/>
    <property type="evidence" value="ECO:0000315"/>
    <property type="project" value="UniProtKB"/>
</dbReference>
<dbReference type="GO" id="GO:0141196">
    <property type="term" value="P:transposable element silencing by piRNA-mediated DNA methylation"/>
    <property type="evidence" value="ECO:0000353"/>
    <property type="project" value="FlyBase"/>
</dbReference>
<dbReference type="Gene3D" id="3.40.50.150">
    <property type="entry name" value="Vaccinia Virus protein VP39"/>
    <property type="match status" value="1"/>
</dbReference>
<dbReference type="InterPro" id="IPR025766">
    <property type="entry name" value="ADD"/>
</dbReference>
<dbReference type="InterPro" id="IPR040552">
    <property type="entry name" value="DNMT3_ADD_GATA1-like"/>
</dbReference>
<dbReference type="InterPro" id="IPR049554">
    <property type="entry name" value="DNMT3_ADD_PHD"/>
</dbReference>
<dbReference type="InterPro" id="IPR029063">
    <property type="entry name" value="SAM-dependent_MTases_sf"/>
</dbReference>
<dbReference type="InterPro" id="IPR011011">
    <property type="entry name" value="Znf_FYVE_PHD"/>
</dbReference>
<dbReference type="PANTHER" id="PTHR23068:SF13">
    <property type="entry name" value="DNA (CYTOSINE-5)-METHYLTRANSFERASE 3-LIKE"/>
    <property type="match status" value="1"/>
</dbReference>
<dbReference type="PANTHER" id="PTHR23068">
    <property type="entry name" value="DNA CYTOSINE-5- -METHYLTRANSFERASE 3-RELATED"/>
    <property type="match status" value="1"/>
</dbReference>
<dbReference type="Pfam" id="PF17980">
    <property type="entry name" value="ADD_DNMT3"/>
    <property type="match status" value="1"/>
</dbReference>
<dbReference type="Pfam" id="PF21255">
    <property type="entry name" value="DNMT3_ADD_GATA1-like"/>
    <property type="match status" value="1"/>
</dbReference>
<dbReference type="SUPFAM" id="SSF57903">
    <property type="entry name" value="FYVE/PHD zinc finger"/>
    <property type="match status" value="1"/>
</dbReference>
<dbReference type="PROSITE" id="PS51533">
    <property type="entry name" value="ADD"/>
    <property type="match status" value="1"/>
</dbReference>
<organism>
    <name type="scientific">Mus musculus</name>
    <name type="common">Mouse</name>
    <dbReference type="NCBI Taxonomy" id="10090"/>
    <lineage>
        <taxon>Eukaryota</taxon>
        <taxon>Metazoa</taxon>
        <taxon>Chordata</taxon>
        <taxon>Craniata</taxon>
        <taxon>Vertebrata</taxon>
        <taxon>Euteleostomi</taxon>
        <taxon>Mammalia</taxon>
        <taxon>Eutheria</taxon>
        <taxon>Euarchontoglires</taxon>
        <taxon>Glires</taxon>
        <taxon>Rodentia</taxon>
        <taxon>Myomorpha</taxon>
        <taxon>Muroidea</taxon>
        <taxon>Muridae</taxon>
        <taxon>Murinae</taxon>
        <taxon>Mus</taxon>
        <taxon>Mus</taxon>
    </lineage>
</organism>
<gene>
    <name type="primary">Dnmt3l</name>
</gene>
<feature type="chain" id="PRO_0000088048" description="DNA (cytosine-5)-methyltransferase 3-like">
    <location>
        <begin position="1"/>
        <end position="421"/>
    </location>
</feature>
<feature type="domain" description="ADD" evidence="2">
    <location>
        <begin position="75"/>
        <end position="207"/>
    </location>
</feature>
<feature type="zinc finger region" description="GATA-type; atypical" evidence="2">
    <location>
        <begin position="86"/>
        <end position="116"/>
    </location>
</feature>
<feature type="zinc finger region" description="PHD-type; atypical" evidence="2">
    <location>
        <begin position="127"/>
        <end position="183"/>
    </location>
</feature>
<feature type="region of interest" description="Disordered" evidence="3">
    <location>
        <begin position="1"/>
        <end position="39"/>
    </location>
</feature>
<feature type="compositionally biased region" description="Polar residues" evidence="3">
    <location>
        <begin position="1"/>
        <end position="14"/>
    </location>
</feature>
<feature type="mutagenesis site" description="Loss of binding to DNMT3A." evidence="8">
    <original>F</original>
    <variation>A</variation>
    <variation>E</variation>
    <location>
        <position position="297"/>
    </location>
</feature>
<protein>
    <recommendedName>
        <fullName>DNA (cytosine-5)-methyltransferase 3-like</fullName>
    </recommendedName>
</protein>
<keyword id="KW-0221">Differentiation</keyword>
<keyword id="KW-0479">Metal-binding</keyword>
<keyword id="KW-0539">Nucleus</keyword>
<keyword id="KW-1185">Reference proteome</keyword>
<keyword id="KW-0744">Spermatogenesis</keyword>
<keyword id="KW-0862">Zinc</keyword>
<keyword id="KW-0863">Zinc-finger</keyword>
<evidence type="ECO:0000250" key="1">
    <source>
        <dbReference type="UniProtKB" id="Q9UJW3"/>
    </source>
</evidence>
<evidence type="ECO:0000255" key="2">
    <source>
        <dbReference type="PROSITE-ProRule" id="PRU00865"/>
    </source>
</evidence>
<evidence type="ECO:0000256" key="3">
    <source>
        <dbReference type="SAM" id="MobiDB-lite"/>
    </source>
</evidence>
<evidence type="ECO:0000269" key="4">
    <source>
    </source>
</evidence>
<evidence type="ECO:0000269" key="5">
    <source>
    </source>
</evidence>
<evidence type="ECO:0000269" key="6">
    <source>
    </source>
</evidence>
<evidence type="ECO:0000269" key="7">
    <source>
    </source>
</evidence>
<evidence type="ECO:0000269" key="8">
    <source>
    </source>
</evidence>
<evidence type="ECO:0000269" key="9">
    <source>
    </source>
</evidence>
<evidence type="ECO:0000269" key="10">
    <source>
    </source>
</evidence>
<evidence type="ECO:0000305" key="11"/>
<proteinExistence type="evidence at protein level"/>
<accession>Q9CWR8</accession>
<reference key="1">
    <citation type="journal article" date="2001" name="Cytogenet. Cell Genet.">
        <title>Isolation and initial characterization of the mouse Dnmt3l gene.</title>
        <authorList>
            <person name="Aapola U."/>
            <person name="Lyle R."/>
            <person name="Krohn K."/>
            <person name="Antonarakis S.E."/>
            <person name="Peterson P."/>
        </authorList>
    </citation>
    <scope>NUCLEOTIDE SEQUENCE [MRNA]</scope>
    <scope>TISSUE SPECIFICITY</scope>
</reference>
<reference key="2">
    <citation type="submission" date="2000-01" db="EMBL/GenBank/DDBJ databases">
        <title>Full-length cDNA of a murine Dnmt3-like gene.</title>
        <authorList>
            <person name="Shaoping X."/>
            <person name="Hata K."/>
            <person name="Li E."/>
        </authorList>
    </citation>
    <scope>NUCLEOTIDE SEQUENCE [MRNA]</scope>
</reference>
<reference key="3">
    <citation type="journal article" date="2005" name="Science">
        <title>The transcriptional landscape of the mammalian genome.</title>
        <authorList>
            <person name="Carninci P."/>
            <person name="Kasukawa T."/>
            <person name="Katayama S."/>
            <person name="Gough J."/>
            <person name="Frith M.C."/>
            <person name="Maeda N."/>
            <person name="Oyama R."/>
            <person name="Ravasi T."/>
            <person name="Lenhard B."/>
            <person name="Wells C."/>
            <person name="Kodzius R."/>
            <person name="Shimokawa K."/>
            <person name="Bajic V.B."/>
            <person name="Brenner S.E."/>
            <person name="Batalov S."/>
            <person name="Forrest A.R."/>
            <person name="Zavolan M."/>
            <person name="Davis M.J."/>
            <person name="Wilming L.G."/>
            <person name="Aidinis V."/>
            <person name="Allen J.E."/>
            <person name="Ambesi-Impiombato A."/>
            <person name="Apweiler R."/>
            <person name="Aturaliya R.N."/>
            <person name="Bailey T.L."/>
            <person name="Bansal M."/>
            <person name="Baxter L."/>
            <person name="Beisel K.W."/>
            <person name="Bersano T."/>
            <person name="Bono H."/>
            <person name="Chalk A.M."/>
            <person name="Chiu K.P."/>
            <person name="Choudhary V."/>
            <person name="Christoffels A."/>
            <person name="Clutterbuck D.R."/>
            <person name="Crowe M.L."/>
            <person name="Dalla E."/>
            <person name="Dalrymple B.P."/>
            <person name="de Bono B."/>
            <person name="Della Gatta G."/>
            <person name="di Bernardo D."/>
            <person name="Down T."/>
            <person name="Engstrom P."/>
            <person name="Fagiolini M."/>
            <person name="Faulkner G."/>
            <person name="Fletcher C.F."/>
            <person name="Fukushima T."/>
            <person name="Furuno M."/>
            <person name="Futaki S."/>
            <person name="Gariboldi M."/>
            <person name="Georgii-Hemming P."/>
            <person name="Gingeras T.R."/>
            <person name="Gojobori T."/>
            <person name="Green R.E."/>
            <person name="Gustincich S."/>
            <person name="Harbers M."/>
            <person name="Hayashi Y."/>
            <person name="Hensch T.K."/>
            <person name="Hirokawa N."/>
            <person name="Hill D."/>
            <person name="Huminiecki L."/>
            <person name="Iacono M."/>
            <person name="Ikeo K."/>
            <person name="Iwama A."/>
            <person name="Ishikawa T."/>
            <person name="Jakt M."/>
            <person name="Kanapin A."/>
            <person name="Katoh M."/>
            <person name="Kawasawa Y."/>
            <person name="Kelso J."/>
            <person name="Kitamura H."/>
            <person name="Kitano H."/>
            <person name="Kollias G."/>
            <person name="Krishnan S.P."/>
            <person name="Kruger A."/>
            <person name="Kummerfeld S.K."/>
            <person name="Kurochkin I.V."/>
            <person name="Lareau L.F."/>
            <person name="Lazarevic D."/>
            <person name="Lipovich L."/>
            <person name="Liu J."/>
            <person name="Liuni S."/>
            <person name="McWilliam S."/>
            <person name="Madan Babu M."/>
            <person name="Madera M."/>
            <person name="Marchionni L."/>
            <person name="Matsuda H."/>
            <person name="Matsuzawa S."/>
            <person name="Miki H."/>
            <person name="Mignone F."/>
            <person name="Miyake S."/>
            <person name="Morris K."/>
            <person name="Mottagui-Tabar S."/>
            <person name="Mulder N."/>
            <person name="Nakano N."/>
            <person name="Nakauchi H."/>
            <person name="Ng P."/>
            <person name="Nilsson R."/>
            <person name="Nishiguchi S."/>
            <person name="Nishikawa S."/>
            <person name="Nori F."/>
            <person name="Ohara O."/>
            <person name="Okazaki Y."/>
            <person name="Orlando V."/>
            <person name="Pang K.C."/>
            <person name="Pavan W.J."/>
            <person name="Pavesi G."/>
            <person name="Pesole G."/>
            <person name="Petrovsky N."/>
            <person name="Piazza S."/>
            <person name="Reed J."/>
            <person name="Reid J.F."/>
            <person name="Ring B.Z."/>
            <person name="Ringwald M."/>
            <person name="Rost B."/>
            <person name="Ruan Y."/>
            <person name="Salzberg S.L."/>
            <person name="Sandelin A."/>
            <person name="Schneider C."/>
            <person name="Schoenbach C."/>
            <person name="Sekiguchi K."/>
            <person name="Semple C.A."/>
            <person name="Seno S."/>
            <person name="Sessa L."/>
            <person name="Sheng Y."/>
            <person name="Shibata Y."/>
            <person name="Shimada H."/>
            <person name="Shimada K."/>
            <person name="Silva D."/>
            <person name="Sinclair B."/>
            <person name="Sperling S."/>
            <person name="Stupka E."/>
            <person name="Sugiura K."/>
            <person name="Sultana R."/>
            <person name="Takenaka Y."/>
            <person name="Taki K."/>
            <person name="Tammoja K."/>
            <person name="Tan S.L."/>
            <person name="Tang S."/>
            <person name="Taylor M.S."/>
            <person name="Tegner J."/>
            <person name="Teichmann S.A."/>
            <person name="Ueda H.R."/>
            <person name="van Nimwegen E."/>
            <person name="Verardo R."/>
            <person name="Wei C.L."/>
            <person name="Yagi K."/>
            <person name="Yamanishi H."/>
            <person name="Zabarovsky E."/>
            <person name="Zhu S."/>
            <person name="Zimmer A."/>
            <person name="Hide W."/>
            <person name="Bult C."/>
            <person name="Grimmond S.M."/>
            <person name="Teasdale R.D."/>
            <person name="Liu E.T."/>
            <person name="Brusic V."/>
            <person name="Quackenbush J."/>
            <person name="Wahlestedt C."/>
            <person name="Mattick J.S."/>
            <person name="Hume D.A."/>
            <person name="Kai C."/>
            <person name="Sasaki D."/>
            <person name="Tomaru Y."/>
            <person name="Fukuda S."/>
            <person name="Kanamori-Katayama M."/>
            <person name="Suzuki M."/>
            <person name="Aoki J."/>
            <person name="Arakawa T."/>
            <person name="Iida J."/>
            <person name="Imamura K."/>
            <person name="Itoh M."/>
            <person name="Kato T."/>
            <person name="Kawaji H."/>
            <person name="Kawagashira N."/>
            <person name="Kawashima T."/>
            <person name="Kojima M."/>
            <person name="Kondo S."/>
            <person name="Konno H."/>
            <person name="Nakano K."/>
            <person name="Ninomiya N."/>
            <person name="Nishio T."/>
            <person name="Okada M."/>
            <person name="Plessy C."/>
            <person name="Shibata K."/>
            <person name="Shiraki T."/>
            <person name="Suzuki S."/>
            <person name="Tagami M."/>
            <person name="Waki K."/>
            <person name="Watahiki A."/>
            <person name="Okamura-Oho Y."/>
            <person name="Suzuki H."/>
            <person name="Kawai J."/>
            <person name="Hayashizaki Y."/>
        </authorList>
    </citation>
    <scope>NUCLEOTIDE SEQUENCE [LARGE SCALE MRNA]</scope>
    <source>
        <strain>C57BL/6J</strain>
        <tissue>Embryonic stem cell</tissue>
    </source>
</reference>
<reference key="4">
    <citation type="journal article" date="2004" name="Genome Res.">
        <title>The status, quality, and expansion of the NIH full-length cDNA project: the Mammalian Gene Collection (MGC).</title>
        <authorList>
            <consortium name="The MGC Project Team"/>
        </authorList>
    </citation>
    <scope>NUCLEOTIDE SEQUENCE [LARGE SCALE MRNA]</scope>
    <source>
        <strain>C57BL/6J</strain>
        <tissue>Embryo</tissue>
    </source>
</reference>
<reference key="5">
    <citation type="journal article" date="2001" name="Science">
        <title>Dnmt3L and the establishment of maternal genomic imprints.</title>
        <authorList>
            <person name="Bourc'his D."/>
            <person name="Xu G.L."/>
            <person name="Lin C.S."/>
            <person name="Bollman B."/>
            <person name="Bestor T.H."/>
        </authorList>
    </citation>
    <scope>FUNCTION</scope>
    <scope>DISRUPTION PHENOTYPE</scope>
</reference>
<reference key="6">
    <citation type="journal article" date="2004" name="Nature">
        <title>Meiotic catastrophe and retrotransposon reactivation in male germ cells lacking Dnmt3L.</title>
        <authorList>
            <person name="Bourc'his D."/>
            <person name="Bestor T.H."/>
        </authorList>
    </citation>
    <scope>FUNCTION</scope>
    <scope>DEVELOPMENTAL STAGE</scope>
    <scope>DISRUPTION PHENOTYPE</scope>
</reference>
<reference key="7">
    <citation type="journal article" date="2005" name="J. Biol. Chem.">
        <title>Mechanism of stimulation of catalytic activity of Dnmt3A and Dnmt3B DNA-(cytosine-C5)-methyltransferases by Dnmt3L.</title>
        <authorList>
            <person name="Gowher H."/>
            <person name="Liebert K."/>
            <person name="Hermann A."/>
            <person name="Xu G."/>
            <person name="Jeltsch A."/>
        </authorList>
    </citation>
    <scope>FUNCTION</scope>
</reference>
<reference key="8">
    <citation type="journal article" date="2013" name="Cell">
        <title>Dnmt3L antagonizes DNA methylation at bivalent promoters and favors DNA methylation at gene bodies in ESCs.</title>
        <authorList>
            <person name="Neri F."/>
            <person name="Krepelova A."/>
            <person name="Incarnato D."/>
            <person name="Maldotti M."/>
            <person name="Parlato C."/>
            <person name="Galvagni F."/>
            <person name="Matarese F."/>
            <person name="Stunnenberg H.G."/>
            <person name="Oliviero S."/>
        </authorList>
    </citation>
    <scope>FUNCTION</scope>
    <scope>INTERACTION WITH EZH2</scope>
</reference>
<reference key="9">
    <citation type="journal article" date="2008" name="Nucleic Acids Res.">
        <title>Formation of nucleoprotein filaments by mammalian DNA methyltransferase Dnmt3a in complex with regulator Dnmt3L.</title>
        <authorList>
            <person name="Jurkowska R.Z."/>
            <person name="Anspach N."/>
            <person name="Urbanke C."/>
            <person name="Jia D."/>
            <person name="Reinhardt R."/>
            <person name="Nellen W."/>
            <person name="Cheng X."/>
            <person name="Jeltsch A."/>
        </authorList>
    </citation>
    <scope>MUTAGENESIS OF PHE-297</scope>
</reference>
<reference key="10">
    <citation type="journal article" date="2020" name="Nature">
        <title>SPOCD1 is an essential executor of piRNA-directed de novo DNA methylation.</title>
        <authorList>
            <person name="Zoch A."/>
            <person name="Auchynnikava T."/>
            <person name="Berrens R.V."/>
            <person name="Kabayama Y."/>
            <person name="Schoepp T."/>
            <person name="Heep M."/>
            <person name="Vasiliauskaite L."/>
            <person name="Perez-Rico Y.A."/>
            <person name="Cook A.G."/>
            <person name="Shkumatava A."/>
            <person name="Rappsilber J."/>
            <person name="Allshire R.C."/>
            <person name="O'Carroll D."/>
        </authorList>
    </citation>
    <scope>INTERACTION WITH SPOCD1</scope>
</reference>
<sequence>MGSRETPSSCSKTLETLDLETSDSSSPDADSPLEEQWLKSSPALKEDSVDVVLEDCKEPLSPSSPPTGREMIRYEVKVNRRSIEDICLCCGTLQVYTRHPLFEGGLCAPCKDKFLESLFLYDDDGHQSYCTICCSGGTLFICESPDCTRCYCFECVDILVGPGTSERINAMACWVCFLCLPFSRSGLLQRRKRWRHQLKAFHDQEGAGPMEIYKTVSAWKRQPVRVLSLFRNIDKVLKSLGFLESGSGSGGGTLKYVEDVTNVVRRDVEKWGPFDLVYGSTQPLGSSCDRCPGWYMFQFHRILQYALPRQESQRPFFWIFMDNLLLTEDDQETTTRFLQTEAVTLQDVRGRDYQNAMRVWSNIPGLKSKHAPLTPKEEEYLQAQVRSRSKLDAPKVDLLVKNCLLPLREYFKYFSQNSLPL</sequence>